<dbReference type="EMBL" id="BC082211">
    <property type="protein sequence ID" value="AAH82211.1"/>
    <property type="molecule type" value="mRNA"/>
</dbReference>
<dbReference type="RefSeq" id="NP_001087952.1">
    <property type="nucleotide sequence ID" value="NM_001094483.1"/>
</dbReference>
<dbReference type="SMR" id="Q641S2"/>
<dbReference type="DNASU" id="494632"/>
<dbReference type="GeneID" id="494632"/>
<dbReference type="KEGG" id="xla:494632"/>
<dbReference type="AGR" id="Xenbase:XB-GENE-941640"/>
<dbReference type="CTD" id="494632"/>
<dbReference type="OrthoDB" id="2129069at2759"/>
<dbReference type="Proteomes" id="UP000186698">
    <property type="component" value="Chromosome 8S"/>
</dbReference>
<dbReference type="Bgee" id="494632">
    <property type="expression patterns" value="Expressed in heart and 19 other cell types or tissues"/>
</dbReference>
<dbReference type="GO" id="GO:0005739">
    <property type="term" value="C:mitochondrion"/>
    <property type="evidence" value="ECO:0000318"/>
    <property type="project" value="GO_Central"/>
</dbReference>
<dbReference type="GO" id="GO:0019216">
    <property type="term" value="P:regulation of lipid metabolic process"/>
    <property type="evidence" value="ECO:0000318"/>
    <property type="project" value="GO_Central"/>
</dbReference>
<dbReference type="InterPro" id="IPR010754">
    <property type="entry name" value="OPA3-like"/>
</dbReference>
<dbReference type="PANTHER" id="PTHR12499:SF0">
    <property type="entry name" value="OPTIC ATROPHY 3 PROTEIN"/>
    <property type="match status" value="1"/>
</dbReference>
<dbReference type="PANTHER" id="PTHR12499">
    <property type="entry name" value="OPTIC ATROPHY 3 PROTEIN OPA3"/>
    <property type="match status" value="1"/>
</dbReference>
<dbReference type="Pfam" id="PF07047">
    <property type="entry name" value="OPA3"/>
    <property type="match status" value="1"/>
</dbReference>
<feature type="chain" id="PRO_0000326549" description="Optic atrophy 3 protein homolog">
    <location>
        <begin position="1"/>
        <end position="151"/>
    </location>
</feature>
<feature type="coiled-coil region" evidence="2">
    <location>
        <begin position="106"/>
        <end position="131"/>
    </location>
</feature>
<protein>
    <recommendedName>
        <fullName>Optic atrophy 3 protein homolog</fullName>
    </recommendedName>
</protein>
<proteinExistence type="evidence at transcript level"/>
<reference key="1">
    <citation type="submission" date="2004-09" db="EMBL/GenBank/DDBJ databases">
        <authorList>
            <consortium name="NIH - Xenopus Gene Collection (XGC) project"/>
        </authorList>
    </citation>
    <scope>NUCLEOTIDE SEQUENCE [LARGE SCALE MRNA]</scope>
    <source>
        <tissue>Testis</tissue>
    </source>
</reference>
<evidence type="ECO:0000250" key="1"/>
<evidence type="ECO:0000255" key="2"/>
<evidence type="ECO:0000305" key="3"/>
<name>OPA3_XENLA</name>
<comment type="function">
    <text evidence="1">May play some role in mitochondrial processes.</text>
</comment>
<comment type="subcellular location">
    <subcellularLocation>
        <location evidence="1">Mitochondrion</location>
    </subcellularLocation>
</comment>
<comment type="similarity">
    <text evidence="3">Belongs to the OPA3 family.</text>
</comment>
<gene>
    <name type="primary">opa3</name>
</gene>
<accession>Q641S2</accession>
<keyword id="KW-0175">Coiled coil</keyword>
<keyword id="KW-0496">Mitochondrion</keyword>
<keyword id="KW-1185">Reference proteome</keyword>
<sequence>MVVGAFPIAKLLYLGIRQISKPLANRIKAGARRSEFFRTYVCLPPAQVYHWVEMRSKMRIMGFRGAVIKPLNEDAAAELGAELLGEAIIFLIGGGCMVAEYSRQSANSHRKEEEMEARLGSMEAEIARLGLLTEELETRARVTERQQLAGK</sequence>
<organism>
    <name type="scientific">Xenopus laevis</name>
    <name type="common">African clawed frog</name>
    <dbReference type="NCBI Taxonomy" id="8355"/>
    <lineage>
        <taxon>Eukaryota</taxon>
        <taxon>Metazoa</taxon>
        <taxon>Chordata</taxon>
        <taxon>Craniata</taxon>
        <taxon>Vertebrata</taxon>
        <taxon>Euteleostomi</taxon>
        <taxon>Amphibia</taxon>
        <taxon>Batrachia</taxon>
        <taxon>Anura</taxon>
        <taxon>Pipoidea</taxon>
        <taxon>Pipidae</taxon>
        <taxon>Xenopodinae</taxon>
        <taxon>Xenopus</taxon>
        <taxon>Xenopus</taxon>
    </lineage>
</organism>